<reference key="1">
    <citation type="journal article" date="2004" name="Proc. Natl. Acad. Sci. U.S.A.">
        <title>Structural flexibility in the Burkholderia mallei genome.</title>
        <authorList>
            <person name="Nierman W.C."/>
            <person name="DeShazer D."/>
            <person name="Kim H.S."/>
            <person name="Tettelin H."/>
            <person name="Nelson K.E."/>
            <person name="Feldblyum T.V."/>
            <person name="Ulrich R.L."/>
            <person name="Ronning C.M."/>
            <person name="Brinkac L.M."/>
            <person name="Daugherty S.C."/>
            <person name="Davidsen T.D."/>
            <person name="DeBoy R.T."/>
            <person name="Dimitrov G."/>
            <person name="Dodson R.J."/>
            <person name="Durkin A.S."/>
            <person name="Gwinn M.L."/>
            <person name="Haft D.H."/>
            <person name="Khouri H.M."/>
            <person name="Kolonay J.F."/>
            <person name="Madupu R."/>
            <person name="Mohammoud Y."/>
            <person name="Nelson W.C."/>
            <person name="Radune D."/>
            <person name="Romero C.M."/>
            <person name="Sarria S."/>
            <person name="Selengut J."/>
            <person name="Shamblin C."/>
            <person name="Sullivan S.A."/>
            <person name="White O."/>
            <person name="Yu Y."/>
            <person name="Zafar N."/>
            <person name="Zhou L."/>
            <person name="Fraser C.M."/>
        </authorList>
    </citation>
    <scope>NUCLEOTIDE SEQUENCE [LARGE SCALE GENOMIC DNA]</scope>
    <source>
        <strain>ATCC 23344</strain>
    </source>
</reference>
<keyword id="KW-1185">Reference proteome</keyword>
<keyword id="KW-0687">Ribonucleoprotein</keyword>
<keyword id="KW-0689">Ribosomal protein</keyword>
<keyword id="KW-0694">RNA-binding</keyword>
<keyword id="KW-0699">rRNA-binding</keyword>
<dbReference type="EMBL" id="CP000010">
    <property type="protein sequence ID" value="AAU47845.1"/>
    <property type="molecule type" value="Genomic_DNA"/>
</dbReference>
<dbReference type="RefSeq" id="WP_004197926.1">
    <property type="nucleotide sequence ID" value="NC_006348.1"/>
</dbReference>
<dbReference type="RefSeq" id="YP_104141.1">
    <property type="nucleotide sequence ID" value="NC_006348.1"/>
</dbReference>
<dbReference type="SMR" id="Q62GN0"/>
<dbReference type="GeneID" id="93061807"/>
<dbReference type="KEGG" id="bma:BMA2607"/>
<dbReference type="PATRIC" id="fig|243160.12.peg.2678"/>
<dbReference type="eggNOG" id="COG0522">
    <property type="taxonomic scope" value="Bacteria"/>
</dbReference>
<dbReference type="HOGENOM" id="CLU_092403_0_2_4"/>
<dbReference type="Proteomes" id="UP000006693">
    <property type="component" value="Chromosome 1"/>
</dbReference>
<dbReference type="GO" id="GO:0015935">
    <property type="term" value="C:small ribosomal subunit"/>
    <property type="evidence" value="ECO:0007669"/>
    <property type="project" value="InterPro"/>
</dbReference>
<dbReference type="GO" id="GO:0019843">
    <property type="term" value="F:rRNA binding"/>
    <property type="evidence" value="ECO:0007669"/>
    <property type="project" value="UniProtKB-UniRule"/>
</dbReference>
<dbReference type="GO" id="GO:0003735">
    <property type="term" value="F:structural constituent of ribosome"/>
    <property type="evidence" value="ECO:0007669"/>
    <property type="project" value="InterPro"/>
</dbReference>
<dbReference type="GO" id="GO:0042274">
    <property type="term" value="P:ribosomal small subunit biogenesis"/>
    <property type="evidence" value="ECO:0007669"/>
    <property type="project" value="TreeGrafter"/>
</dbReference>
<dbReference type="GO" id="GO:0006412">
    <property type="term" value="P:translation"/>
    <property type="evidence" value="ECO:0007669"/>
    <property type="project" value="UniProtKB-UniRule"/>
</dbReference>
<dbReference type="CDD" id="cd00165">
    <property type="entry name" value="S4"/>
    <property type="match status" value="1"/>
</dbReference>
<dbReference type="FunFam" id="1.10.1050.10:FF:000001">
    <property type="entry name" value="30S ribosomal protein S4"/>
    <property type="match status" value="1"/>
</dbReference>
<dbReference type="FunFam" id="3.10.290.10:FF:000001">
    <property type="entry name" value="30S ribosomal protein S4"/>
    <property type="match status" value="1"/>
</dbReference>
<dbReference type="Gene3D" id="1.10.1050.10">
    <property type="entry name" value="Ribosomal Protein S4 Delta 41, Chain A, domain 1"/>
    <property type="match status" value="1"/>
</dbReference>
<dbReference type="Gene3D" id="3.10.290.10">
    <property type="entry name" value="RNA-binding S4 domain"/>
    <property type="match status" value="1"/>
</dbReference>
<dbReference type="HAMAP" id="MF_01306_B">
    <property type="entry name" value="Ribosomal_uS4_B"/>
    <property type="match status" value="1"/>
</dbReference>
<dbReference type="InterPro" id="IPR022801">
    <property type="entry name" value="Ribosomal_uS4"/>
</dbReference>
<dbReference type="InterPro" id="IPR005709">
    <property type="entry name" value="Ribosomal_uS4_bac-type"/>
</dbReference>
<dbReference type="InterPro" id="IPR018079">
    <property type="entry name" value="Ribosomal_uS4_CS"/>
</dbReference>
<dbReference type="InterPro" id="IPR001912">
    <property type="entry name" value="Ribosomal_uS4_N"/>
</dbReference>
<dbReference type="InterPro" id="IPR002942">
    <property type="entry name" value="S4_RNA-bd"/>
</dbReference>
<dbReference type="InterPro" id="IPR036986">
    <property type="entry name" value="S4_RNA-bd_sf"/>
</dbReference>
<dbReference type="NCBIfam" id="NF003717">
    <property type="entry name" value="PRK05327.1"/>
    <property type="match status" value="1"/>
</dbReference>
<dbReference type="NCBIfam" id="TIGR01017">
    <property type="entry name" value="rpsD_bact"/>
    <property type="match status" value="1"/>
</dbReference>
<dbReference type="PANTHER" id="PTHR11831">
    <property type="entry name" value="30S 40S RIBOSOMAL PROTEIN"/>
    <property type="match status" value="1"/>
</dbReference>
<dbReference type="PANTHER" id="PTHR11831:SF4">
    <property type="entry name" value="SMALL RIBOSOMAL SUBUNIT PROTEIN US4M"/>
    <property type="match status" value="1"/>
</dbReference>
<dbReference type="Pfam" id="PF00163">
    <property type="entry name" value="Ribosomal_S4"/>
    <property type="match status" value="1"/>
</dbReference>
<dbReference type="Pfam" id="PF01479">
    <property type="entry name" value="S4"/>
    <property type="match status" value="1"/>
</dbReference>
<dbReference type="SMART" id="SM01390">
    <property type="entry name" value="Ribosomal_S4"/>
    <property type="match status" value="1"/>
</dbReference>
<dbReference type="SMART" id="SM00363">
    <property type="entry name" value="S4"/>
    <property type="match status" value="1"/>
</dbReference>
<dbReference type="SUPFAM" id="SSF55174">
    <property type="entry name" value="Alpha-L RNA-binding motif"/>
    <property type="match status" value="1"/>
</dbReference>
<dbReference type="PROSITE" id="PS00632">
    <property type="entry name" value="RIBOSOMAL_S4"/>
    <property type="match status" value="1"/>
</dbReference>
<dbReference type="PROSITE" id="PS50889">
    <property type="entry name" value="S4"/>
    <property type="match status" value="1"/>
</dbReference>
<gene>
    <name evidence="1" type="primary">rpsD</name>
    <name type="ordered locus">BMA2607</name>
</gene>
<comment type="function">
    <text evidence="1">One of the primary rRNA binding proteins, it binds directly to 16S rRNA where it nucleates assembly of the body of the 30S subunit.</text>
</comment>
<comment type="function">
    <text evidence="1">With S5 and S12 plays an important role in translational accuracy.</text>
</comment>
<comment type="subunit">
    <text evidence="1">Part of the 30S ribosomal subunit. Contacts protein S5. The interaction surface between S4 and S5 is involved in control of translational fidelity.</text>
</comment>
<comment type="similarity">
    <text evidence="1">Belongs to the universal ribosomal protein uS4 family.</text>
</comment>
<feature type="chain" id="PRO_0000132356" description="Small ribosomal subunit protein uS4">
    <location>
        <begin position="1"/>
        <end position="207"/>
    </location>
</feature>
<feature type="domain" description="S4 RNA-binding" evidence="1">
    <location>
        <begin position="97"/>
        <end position="160"/>
    </location>
</feature>
<sequence length="207" mass="23151">MARYIGPKAKLSRREGTDLFLKSARRSLADKCKLDSKPGQHGRISGARTSDYGTQLREKQKVKRIYGVLERQFRRYFAEADRRKGNTGETLLQLLESRLDNVVYRMGFGSTRAEARQLVSHKAITVNGIVANIPSQQVKAGDVVAIREKAKKQARIVEALSLAEQGGMPSWVAVDAKKFEGTFKQVPERADIAGDINESLIVELYSR</sequence>
<accession>Q62GN0</accession>
<protein>
    <recommendedName>
        <fullName evidence="1">Small ribosomal subunit protein uS4</fullName>
    </recommendedName>
    <alternativeName>
        <fullName evidence="2">30S ribosomal protein S4</fullName>
    </alternativeName>
</protein>
<proteinExistence type="inferred from homology"/>
<name>RS4_BURMA</name>
<organism>
    <name type="scientific">Burkholderia mallei (strain ATCC 23344)</name>
    <dbReference type="NCBI Taxonomy" id="243160"/>
    <lineage>
        <taxon>Bacteria</taxon>
        <taxon>Pseudomonadati</taxon>
        <taxon>Pseudomonadota</taxon>
        <taxon>Betaproteobacteria</taxon>
        <taxon>Burkholderiales</taxon>
        <taxon>Burkholderiaceae</taxon>
        <taxon>Burkholderia</taxon>
        <taxon>pseudomallei group</taxon>
    </lineage>
</organism>
<evidence type="ECO:0000255" key="1">
    <source>
        <dbReference type="HAMAP-Rule" id="MF_01306"/>
    </source>
</evidence>
<evidence type="ECO:0000305" key="2"/>